<comment type="function">
    <text evidence="1">Catalyzes the formation of phosphatidylethanolamine (PtdEtn) from phosphatidylserine (PtdSer).</text>
</comment>
<comment type="catalytic activity">
    <reaction evidence="1">
        <text>a 1,2-diacyl-sn-glycero-3-phospho-L-serine + H(+) = a 1,2-diacyl-sn-glycero-3-phosphoethanolamine + CO2</text>
        <dbReference type="Rhea" id="RHEA:20828"/>
        <dbReference type="ChEBI" id="CHEBI:15378"/>
        <dbReference type="ChEBI" id="CHEBI:16526"/>
        <dbReference type="ChEBI" id="CHEBI:57262"/>
        <dbReference type="ChEBI" id="CHEBI:64612"/>
        <dbReference type="EC" id="4.1.1.65"/>
    </reaction>
</comment>
<comment type="cofactor">
    <cofactor evidence="1">
        <name>pyruvate</name>
        <dbReference type="ChEBI" id="CHEBI:15361"/>
    </cofactor>
    <text evidence="1">Binds 1 pyruvoyl group covalently per subunit.</text>
</comment>
<comment type="pathway">
    <text evidence="1">Phospholipid metabolism; phosphatidylethanolamine biosynthesis; phosphatidylethanolamine from CDP-diacylglycerol: step 2/2.</text>
</comment>
<comment type="subunit">
    <text evidence="1">Heterodimer of a large membrane-associated beta subunit and a small pyruvoyl-containing alpha subunit.</text>
</comment>
<comment type="subcellular location">
    <subcellularLocation>
        <location evidence="1">Cell membrane</location>
        <topology evidence="1">Peripheral membrane protein</topology>
    </subcellularLocation>
</comment>
<comment type="PTM">
    <text evidence="1">Is synthesized initially as an inactive proenzyme. Formation of the active enzyme involves a self-maturation process in which the active site pyruvoyl group is generated from an internal serine residue via an autocatalytic post-translational modification. Two non-identical subunits are generated from the proenzyme in this reaction, and the pyruvate is formed at the N-terminus of the alpha chain, which is derived from the carboxyl end of the proenzyme. The post-translation cleavage follows an unusual pathway, termed non-hydrolytic serinolysis, in which the side chain hydroxyl group of the serine supplies its oxygen atom to form the C-terminus of the beta chain, while the remainder of the serine residue undergoes an oxidative deamination to produce ammonia and the pyruvoyl prosthetic group on the alpha chain.</text>
</comment>
<comment type="similarity">
    <text evidence="1">Belongs to the phosphatidylserine decarboxylase family. PSD-A subfamily.</text>
</comment>
<dbReference type="EC" id="4.1.1.65" evidence="1"/>
<dbReference type="EMBL" id="CP000526">
    <property type="protein sequence ID" value="ABM51489.1"/>
    <property type="molecule type" value="Genomic_DNA"/>
</dbReference>
<dbReference type="RefSeq" id="WP_004196436.1">
    <property type="nucleotide sequence ID" value="NC_008785.1"/>
</dbReference>
<dbReference type="SMR" id="A1V2K3"/>
<dbReference type="KEGG" id="bmv:BMASAVP1_A1116"/>
<dbReference type="HOGENOM" id="CLU_072492_0_0_4"/>
<dbReference type="UniPathway" id="UPA00558">
    <property type="reaction ID" value="UER00616"/>
</dbReference>
<dbReference type="GO" id="GO:0005886">
    <property type="term" value="C:plasma membrane"/>
    <property type="evidence" value="ECO:0007669"/>
    <property type="project" value="UniProtKB-SubCell"/>
</dbReference>
<dbReference type="GO" id="GO:0004609">
    <property type="term" value="F:phosphatidylserine decarboxylase activity"/>
    <property type="evidence" value="ECO:0007669"/>
    <property type="project" value="UniProtKB-UniRule"/>
</dbReference>
<dbReference type="GO" id="GO:0006646">
    <property type="term" value="P:phosphatidylethanolamine biosynthetic process"/>
    <property type="evidence" value="ECO:0007669"/>
    <property type="project" value="UniProtKB-UniRule"/>
</dbReference>
<dbReference type="HAMAP" id="MF_00664">
    <property type="entry name" value="PS_decarb_PSD_A"/>
    <property type="match status" value="1"/>
</dbReference>
<dbReference type="InterPro" id="IPR003817">
    <property type="entry name" value="PS_Dcarbxylase"/>
</dbReference>
<dbReference type="InterPro" id="IPR033175">
    <property type="entry name" value="PSD-A"/>
</dbReference>
<dbReference type="NCBIfam" id="TIGR00164">
    <property type="entry name" value="AS_decarb"/>
    <property type="match status" value="1"/>
</dbReference>
<dbReference type="NCBIfam" id="NF003678">
    <property type="entry name" value="PRK05305.1-2"/>
    <property type="match status" value="1"/>
</dbReference>
<dbReference type="NCBIfam" id="NF003680">
    <property type="entry name" value="PRK05305.1-5"/>
    <property type="match status" value="1"/>
</dbReference>
<dbReference type="NCBIfam" id="NF003685">
    <property type="entry name" value="PRK05305.2-5"/>
    <property type="match status" value="1"/>
</dbReference>
<dbReference type="PANTHER" id="PTHR35809">
    <property type="entry name" value="ARCHAETIDYLSERINE DECARBOXYLASE PROENZYME-RELATED"/>
    <property type="match status" value="1"/>
</dbReference>
<dbReference type="PANTHER" id="PTHR35809:SF1">
    <property type="entry name" value="ARCHAETIDYLSERINE DECARBOXYLASE PROENZYME-RELATED"/>
    <property type="match status" value="1"/>
</dbReference>
<dbReference type="Pfam" id="PF02666">
    <property type="entry name" value="PS_Dcarbxylase"/>
    <property type="match status" value="1"/>
</dbReference>
<organism>
    <name type="scientific">Burkholderia mallei (strain SAVP1)</name>
    <dbReference type="NCBI Taxonomy" id="320388"/>
    <lineage>
        <taxon>Bacteria</taxon>
        <taxon>Pseudomonadati</taxon>
        <taxon>Pseudomonadota</taxon>
        <taxon>Betaproteobacteria</taxon>
        <taxon>Burkholderiales</taxon>
        <taxon>Burkholderiaceae</taxon>
        <taxon>Burkholderia</taxon>
        <taxon>pseudomallei group</taxon>
    </lineage>
</organism>
<reference key="1">
    <citation type="journal article" date="2010" name="Genome Biol. Evol.">
        <title>Continuing evolution of Burkholderia mallei through genome reduction and large-scale rearrangements.</title>
        <authorList>
            <person name="Losada L."/>
            <person name="Ronning C.M."/>
            <person name="DeShazer D."/>
            <person name="Woods D."/>
            <person name="Fedorova N."/>
            <person name="Kim H.S."/>
            <person name="Shabalina S.A."/>
            <person name="Pearson T.R."/>
            <person name="Brinkac L."/>
            <person name="Tan P."/>
            <person name="Nandi T."/>
            <person name="Crabtree J."/>
            <person name="Badger J."/>
            <person name="Beckstrom-Sternberg S."/>
            <person name="Saqib M."/>
            <person name="Schutzer S.E."/>
            <person name="Keim P."/>
            <person name="Nierman W.C."/>
        </authorList>
    </citation>
    <scope>NUCLEOTIDE SEQUENCE [LARGE SCALE GENOMIC DNA]</scope>
    <source>
        <strain>SAVP1</strain>
    </source>
</reference>
<evidence type="ECO:0000255" key="1">
    <source>
        <dbReference type="HAMAP-Rule" id="MF_00664"/>
    </source>
</evidence>
<gene>
    <name evidence="1" type="primary">psd</name>
    <name type="ordered locus">BMASAVP1_A1116</name>
</gene>
<accession>A1V2K3</accession>
<proteinExistence type="inferred from homology"/>
<feature type="chain" id="PRO_1000026638" description="Phosphatidylserine decarboxylase beta chain" evidence="1">
    <location>
        <begin position="1"/>
        <end position="181"/>
    </location>
</feature>
<feature type="chain" id="PRO_1000026639" description="Phosphatidylserine decarboxylase alpha chain" evidence="1">
    <location>
        <begin position="182"/>
        <end position="216"/>
    </location>
</feature>
<feature type="active site" description="Schiff-base intermediate with substrate; via pyruvic acid" evidence="1">
    <location>
        <position position="182"/>
    </location>
</feature>
<feature type="site" description="Cleavage (non-hydrolytic); by autocatalysis" evidence="1">
    <location>
        <begin position="181"/>
        <end position="182"/>
    </location>
</feature>
<feature type="modified residue" description="Pyruvic acid (Ser); by autocatalysis" evidence="1">
    <location>
        <position position="182"/>
    </location>
</feature>
<protein>
    <recommendedName>
        <fullName evidence="1">Phosphatidylserine decarboxylase proenzyme</fullName>
        <ecNumber evidence="1">4.1.1.65</ecNumber>
    </recommendedName>
    <component>
        <recommendedName>
            <fullName evidence="1">Phosphatidylserine decarboxylase alpha chain</fullName>
        </recommendedName>
    </component>
    <component>
        <recommendedName>
            <fullName evidence="1">Phosphatidylserine decarboxylase beta chain</fullName>
        </recommendedName>
    </component>
</protein>
<keyword id="KW-1003">Cell membrane</keyword>
<keyword id="KW-0210">Decarboxylase</keyword>
<keyword id="KW-0444">Lipid biosynthesis</keyword>
<keyword id="KW-0443">Lipid metabolism</keyword>
<keyword id="KW-0456">Lyase</keyword>
<keyword id="KW-0472">Membrane</keyword>
<keyword id="KW-0594">Phospholipid biosynthesis</keyword>
<keyword id="KW-1208">Phospholipid metabolism</keyword>
<keyword id="KW-0670">Pyruvate</keyword>
<keyword id="KW-0865">Zymogen</keyword>
<sequence length="216" mass="23462">MNYPHPIIAREGWPFIAIAAVVALLIHAVGGFGLAWPFWLLLVFVVQFFRDPPRAVPTQANAVLCPADGRIVAVETAHDPYADREALKISVFMNVFNVHSQRSPVDGAVQKVEYFPGAFLNAALDKASAENERNAVVIQTGAGHTVTAVQIAGLVARRILCYVRAGEPLSRGQRYGFIRFGSRVDVYLPKGSRARVSIGEKVSASSTILAELPEQP</sequence>
<name>PSD_BURMS</name>